<feature type="chain" id="PRO_1000014285" description="Small ribosomal subunit protein uS7">
    <location>
        <begin position="1"/>
        <end position="156"/>
    </location>
</feature>
<sequence length="156" mass="17749">MPRRRVVGQRKILPDPKFNSELLAKFINVIMQDGKKSTAEKIIYKALDVVAEKKGEEHLVILEAALDNVRPTVEVKSRRVGGSTYQVPCEVRPVRRNALAMRWLVEAARKRGEKSMALRLAGEMLDAAENKGTAVKKREDVHRMAEANKAFAHYRW</sequence>
<protein>
    <recommendedName>
        <fullName evidence="1">Small ribosomal subunit protein uS7</fullName>
    </recommendedName>
    <alternativeName>
        <fullName evidence="2">30S ribosomal protein S7</fullName>
    </alternativeName>
</protein>
<keyword id="KW-1185">Reference proteome</keyword>
<keyword id="KW-0687">Ribonucleoprotein</keyword>
<keyword id="KW-0689">Ribosomal protein</keyword>
<keyword id="KW-0694">RNA-binding</keyword>
<keyword id="KW-0699">rRNA-binding</keyword>
<keyword id="KW-0820">tRNA-binding</keyword>
<proteinExistence type="inferred from homology"/>
<gene>
    <name evidence="1" type="primary">rpsG</name>
    <name type="ordered locus">Shew_0154</name>
</gene>
<name>RS7_SHELP</name>
<reference key="1">
    <citation type="submission" date="2007-03" db="EMBL/GenBank/DDBJ databases">
        <title>Complete sequence of Shewanella loihica PV-4.</title>
        <authorList>
            <consortium name="US DOE Joint Genome Institute"/>
            <person name="Copeland A."/>
            <person name="Lucas S."/>
            <person name="Lapidus A."/>
            <person name="Barry K."/>
            <person name="Detter J.C."/>
            <person name="Glavina del Rio T."/>
            <person name="Hammon N."/>
            <person name="Israni S."/>
            <person name="Dalin E."/>
            <person name="Tice H."/>
            <person name="Pitluck S."/>
            <person name="Chain P."/>
            <person name="Malfatti S."/>
            <person name="Shin M."/>
            <person name="Vergez L."/>
            <person name="Schmutz J."/>
            <person name="Larimer F."/>
            <person name="Land M."/>
            <person name="Hauser L."/>
            <person name="Kyrpides N."/>
            <person name="Mikhailova N."/>
            <person name="Romine M.F."/>
            <person name="Serres G."/>
            <person name="Fredrickson J."/>
            <person name="Tiedje J."/>
            <person name="Richardson P."/>
        </authorList>
    </citation>
    <scope>NUCLEOTIDE SEQUENCE [LARGE SCALE GENOMIC DNA]</scope>
    <source>
        <strain>ATCC BAA-1088 / PV-4</strain>
    </source>
</reference>
<organism>
    <name type="scientific">Shewanella loihica (strain ATCC BAA-1088 / PV-4)</name>
    <dbReference type="NCBI Taxonomy" id="323850"/>
    <lineage>
        <taxon>Bacteria</taxon>
        <taxon>Pseudomonadati</taxon>
        <taxon>Pseudomonadota</taxon>
        <taxon>Gammaproteobacteria</taxon>
        <taxon>Alteromonadales</taxon>
        <taxon>Shewanellaceae</taxon>
        <taxon>Shewanella</taxon>
    </lineage>
</organism>
<comment type="function">
    <text evidence="1">One of the primary rRNA binding proteins, it binds directly to 16S rRNA where it nucleates assembly of the head domain of the 30S subunit. Is located at the subunit interface close to the decoding center, probably blocks exit of the E-site tRNA.</text>
</comment>
<comment type="subunit">
    <text evidence="1">Part of the 30S ribosomal subunit. Contacts proteins S9 and S11.</text>
</comment>
<comment type="similarity">
    <text evidence="1">Belongs to the universal ribosomal protein uS7 family.</text>
</comment>
<accession>A3Q978</accession>
<dbReference type="EMBL" id="CP000606">
    <property type="protein sequence ID" value="ABO22026.1"/>
    <property type="molecule type" value="Genomic_DNA"/>
</dbReference>
<dbReference type="RefSeq" id="WP_011863963.1">
    <property type="nucleotide sequence ID" value="NC_009092.1"/>
</dbReference>
<dbReference type="SMR" id="A3Q978"/>
<dbReference type="STRING" id="323850.Shew_0154"/>
<dbReference type="KEGG" id="slo:Shew_0154"/>
<dbReference type="eggNOG" id="COG0049">
    <property type="taxonomic scope" value="Bacteria"/>
</dbReference>
<dbReference type="HOGENOM" id="CLU_072226_1_1_6"/>
<dbReference type="OrthoDB" id="9807653at2"/>
<dbReference type="Proteomes" id="UP000001558">
    <property type="component" value="Chromosome"/>
</dbReference>
<dbReference type="GO" id="GO:0015935">
    <property type="term" value="C:small ribosomal subunit"/>
    <property type="evidence" value="ECO:0007669"/>
    <property type="project" value="InterPro"/>
</dbReference>
<dbReference type="GO" id="GO:0019843">
    <property type="term" value="F:rRNA binding"/>
    <property type="evidence" value="ECO:0007669"/>
    <property type="project" value="UniProtKB-UniRule"/>
</dbReference>
<dbReference type="GO" id="GO:0003735">
    <property type="term" value="F:structural constituent of ribosome"/>
    <property type="evidence" value="ECO:0007669"/>
    <property type="project" value="InterPro"/>
</dbReference>
<dbReference type="GO" id="GO:0000049">
    <property type="term" value="F:tRNA binding"/>
    <property type="evidence" value="ECO:0007669"/>
    <property type="project" value="UniProtKB-UniRule"/>
</dbReference>
<dbReference type="GO" id="GO:0006412">
    <property type="term" value="P:translation"/>
    <property type="evidence" value="ECO:0007669"/>
    <property type="project" value="UniProtKB-UniRule"/>
</dbReference>
<dbReference type="CDD" id="cd14869">
    <property type="entry name" value="uS7_Bacteria"/>
    <property type="match status" value="1"/>
</dbReference>
<dbReference type="FunFam" id="1.10.455.10:FF:000001">
    <property type="entry name" value="30S ribosomal protein S7"/>
    <property type="match status" value="1"/>
</dbReference>
<dbReference type="Gene3D" id="1.10.455.10">
    <property type="entry name" value="Ribosomal protein S7 domain"/>
    <property type="match status" value="1"/>
</dbReference>
<dbReference type="HAMAP" id="MF_00480_B">
    <property type="entry name" value="Ribosomal_uS7_B"/>
    <property type="match status" value="1"/>
</dbReference>
<dbReference type="InterPro" id="IPR000235">
    <property type="entry name" value="Ribosomal_uS7"/>
</dbReference>
<dbReference type="InterPro" id="IPR005717">
    <property type="entry name" value="Ribosomal_uS7_bac/org-type"/>
</dbReference>
<dbReference type="InterPro" id="IPR020606">
    <property type="entry name" value="Ribosomal_uS7_CS"/>
</dbReference>
<dbReference type="InterPro" id="IPR023798">
    <property type="entry name" value="Ribosomal_uS7_dom"/>
</dbReference>
<dbReference type="InterPro" id="IPR036823">
    <property type="entry name" value="Ribosomal_uS7_dom_sf"/>
</dbReference>
<dbReference type="NCBIfam" id="TIGR01029">
    <property type="entry name" value="rpsG_bact"/>
    <property type="match status" value="1"/>
</dbReference>
<dbReference type="PANTHER" id="PTHR11205">
    <property type="entry name" value="RIBOSOMAL PROTEIN S7"/>
    <property type="match status" value="1"/>
</dbReference>
<dbReference type="Pfam" id="PF00177">
    <property type="entry name" value="Ribosomal_S7"/>
    <property type="match status" value="1"/>
</dbReference>
<dbReference type="PIRSF" id="PIRSF002122">
    <property type="entry name" value="RPS7p_RPS7a_RPS5e_RPS7o"/>
    <property type="match status" value="1"/>
</dbReference>
<dbReference type="SUPFAM" id="SSF47973">
    <property type="entry name" value="Ribosomal protein S7"/>
    <property type="match status" value="1"/>
</dbReference>
<dbReference type="PROSITE" id="PS00052">
    <property type="entry name" value="RIBOSOMAL_S7"/>
    <property type="match status" value="1"/>
</dbReference>
<evidence type="ECO:0000255" key="1">
    <source>
        <dbReference type="HAMAP-Rule" id="MF_00480"/>
    </source>
</evidence>
<evidence type="ECO:0000305" key="2"/>